<keyword id="KW-0028">Amino-acid biosynthesis</keyword>
<keyword id="KW-0057">Aromatic amino acid biosynthesis</keyword>
<keyword id="KW-0456">Lyase</keyword>
<keyword id="KW-0822">Tryptophan biosynthesis</keyword>
<protein>
    <recommendedName>
        <fullName evidence="1">Tryptophan synthase alpha chain</fullName>
        <ecNumber evidence="1">4.2.1.20</ecNumber>
    </recommendedName>
</protein>
<accession>B8HPH2</accession>
<reference key="1">
    <citation type="journal article" date="2011" name="MBio">
        <title>Novel metabolic attributes of the genus Cyanothece, comprising a group of unicellular nitrogen-fixing Cyanobacteria.</title>
        <authorList>
            <person name="Bandyopadhyay A."/>
            <person name="Elvitigala T."/>
            <person name="Welsh E."/>
            <person name="Stockel J."/>
            <person name="Liberton M."/>
            <person name="Min H."/>
            <person name="Sherman L.A."/>
            <person name="Pakrasi H.B."/>
        </authorList>
    </citation>
    <scope>NUCLEOTIDE SEQUENCE [LARGE SCALE GENOMIC DNA]</scope>
    <source>
        <strain>PCC 7425 / ATCC 29141</strain>
    </source>
</reference>
<name>TRPA_CYAP4</name>
<dbReference type="EC" id="4.2.1.20" evidence="1"/>
<dbReference type="EMBL" id="CP001344">
    <property type="protein sequence ID" value="ACL43833.1"/>
    <property type="molecule type" value="Genomic_DNA"/>
</dbReference>
<dbReference type="SMR" id="B8HPH2"/>
<dbReference type="STRING" id="395961.Cyan7425_1463"/>
<dbReference type="KEGG" id="cyn:Cyan7425_1463"/>
<dbReference type="eggNOG" id="COG0159">
    <property type="taxonomic scope" value="Bacteria"/>
</dbReference>
<dbReference type="HOGENOM" id="CLU_016734_0_2_3"/>
<dbReference type="OrthoDB" id="9804578at2"/>
<dbReference type="UniPathway" id="UPA00035">
    <property type="reaction ID" value="UER00044"/>
</dbReference>
<dbReference type="GO" id="GO:0005829">
    <property type="term" value="C:cytosol"/>
    <property type="evidence" value="ECO:0007669"/>
    <property type="project" value="TreeGrafter"/>
</dbReference>
<dbReference type="GO" id="GO:0004834">
    <property type="term" value="F:tryptophan synthase activity"/>
    <property type="evidence" value="ECO:0007669"/>
    <property type="project" value="UniProtKB-UniRule"/>
</dbReference>
<dbReference type="CDD" id="cd04724">
    <property type="entry name" value="Tryptophan_synthase_alpha"/>
    <property type="match status" value="1"/>
</dbReference>
<dbReference type="FunFam" id="3.20.20.70:FF:000107">
    <property type="entry name" value="Tryptophan synthase alpha chain, chloroplastic"/>
    <property type="match status" value="1"/>
</dbReference>
<dbReference type="Gene3D" id="3.20.20.70">
    <property type="entry name" value="Aldolase class I"/>
    <property type="match status" value="1"/>
</dbReference>
<dbReference type="HAMAP" id="MF_00131">
    <property type="entry name" value="Trp_synth_alpha"/>
    <property type="match status" value="1"/>
</dbReference>
<dbReference type="InterPro" id="IPR013785">
    <property type="entry name" value="Aldolase_TIM"/>
</dbReference>
<dbReference type="InterPro" id="IPR011060">
    <property type="entry name" value="RibuloseP-bd_barrel"/>
</dbReference>
<dbReference type="InterPro" id="IPR018204">
    <property type="entry name" value="Trp_synthase_alpha_AS"/>
</dbReference>
<dbReference type="InterPro" id="IPR002028">
    <property type="entry name" value="Trp_synthase_suA"/>
</dbReference>
<dbReference type="NCBIfam" id="TIGR00262">
    <property type="entry name" value="trpA"/>
    <property type="match status" value="1"/>
</dbReference>
<dbReference type="PANTHER" id="PTHR43406:SF1">
    <property type="entry name" value="TRYPTOPHAN SYNTHASE ALPHA CHAIN, CHLOROPLASTIC"/>
    <property type="match status" value="1"/>
</dbReference>
<dbReference type="PANTHER" id="PTHR43406">
    <property type="entry name" value="TRYPTOPHAN SYNTHASE, ALPHA CHAIN"/>
    <property type="match status" value="1"/>
</dbReference>
<dbReference type="Pfam" id="PF00290">
    <property type="entry name" value="Trp_syntA"/>
    <property type="match status" value="1"/>
</dbReference>
<dbReference type="SUPFAM" id="SSF51366">
    <property type="entry name" value="Ribulose-phoshate binding barrel"/>
    <property type="match status" value="1"/>
</dbReference>
<dbReference type="PROSITE" id="PS00167">
    <property type="entry name" value="TRP_SYNTHASE_ALPHA"/>
    <property type="match status" value="1"/>
</dbReference>
<feature type="chain" id="PRO_1000198709" description="Tryptophan synthase alpha chain">
    <location>
        <begin position="1"/>
        <end position="267"/>
    </location>
</feature>
<feature type="active site" description="Proton acceptor" evidence="1">
    <location>
        <position position="49"/>
    </location>
</feature>
<feature type="active site" description="Proton acceptor" evidence="1">
    <location>
        <position position="60"/>
    </location>
</feature>
<proteinExistence type="inferred from homology"/>
<comment type="function">
    <text evidence="1">The alpha subunit is responsible for the aldol cleavage of indoleglycerol phosphate to indole and glyceraldehyde 3-phosphate.</text>
</comment>
<comment type="catalytic activity">
    <reaction evidence="1">
        <text>(1S,2R)-1-C-(indol-3-yl)glycerol 3-phosphate + L-serine = D-glyceraldehyde 3-phosphate + L-tryptophan + H2O</text>
        <dbReference type="Rhea" id="RHEA:10532"/>
        <dbReference type="ChEBI" id="CHEBI:15377"/>
        <dbReference type="ChEBI" id="CHEBI:33384"/>
        <dbReference type="ChEBI" id="CHEBI:57912"/>
        <dbReference type="ChEBI" id="CHEBI:58866"/>
        <dbReference type="ChEBI" id="CHEBI:59776"/>
        <dbReference type="EC" id="4.2.1.20"/>
    </reaction>
</comment>
<comment type="pathway">
    <text evidence="1">Amino-acid biosynthesis; L-tryptophan biosynthesis; L-tryptophan from chorismate: step 5/5.</text>
</comment>
<comment type="subunit">
    <text evidence="1">Tetramer of two alpha and two beta chains.</text>
</comment>
<comment type="similarity">
    <text evidence="1">Belongs to the TrpA family.</text>
</comment>
<sequence>MVSVSTCFSALRDRAQCALIPFITAGDPSLEITAKALQVLDQQGADLIELGVPYSDPLADGPTIQAAATRALQKGTRLDAVLEMISHVAPNLRSPLILFTYYNPIFHRGVEPFLQQVAQAGVQGLVVPDLPLEEADTVLTQAAAVGIELTLLVAPTTPRSRIAAIAERSQGFIYLVSTTGVTGMRSKVEGRVHELLLELQQVTDKPIGVGFGISQPEHARQVMEWGADAAIVGSAFVKRLAEGTPEQGLAAIADFCRSLKTALTPVD</sequence>
<evidence type="ECO:0000255" key="1">
    <source>
        <dbReference type="HAMAP-Rule" id="MF_00131"/>
    </source>
</evidence>
<organism>
    <name type="scientific">Cyanothece sp. (strain PCC 7425 / ATCC 29141)</name>
    <dbReference type="NCBI Taxonomy" id="395961"/>
    <lineage>
        <taxon>Bacteria</taxon>
        <taxon>Bacillati</taxon>
        <taxon>Cyanobacteriota</taxon>
        <taxon>Cyanophyceae</taxon>
        <taxon>Gomontiellales</taxon>
        <taxon>Cyanothecaceae</taxon>
        <taxon>Cyanothece</taxon>
    </lineage>
</organism>
<gene>
    <name evidence="1" type="primary">trpA</name>
    <name type="ordered locus">Cyan7425_1463</name>
</gene>